<organism>
    <name type="scientific">Emericella nidulans (strain FGSC A4 / ATCC 38163 / CBS 112.46 / NRRL 194 / M139)</name>
    <name type="common">Aspergillus nidulans</name>
    <dbReference type="NCBI Taxonomy" id="227321"/>
    <lineage>
        <taxon>Eukaryota</taxon>
        <taxon>Fungi</taxon>
        <taxon>Dikarya</taxon>
        <taxon>Ascomycota</taxon>
        <taxon>Pezizomycotina</taxon>
        <taxon>Eurotiomycetes</taxon>
        <taxon>Eurotiomycetidae</taxon>
        <taxon>Eurotiales</taxon>
        <taxon>Aspergillaceae</taxon>
        <taxon>Aspergillus</taxon>
        <taxon>Aspergillus subgen. Nidulantes</taxon>
    </lineage>
</organism>
<feature type="signal peptide" evidence="2">
    <location>
        <begin position="1"/>
        <end position="17"/>
    </location>
</feature>
<feature type="chain" id="PRO_0000393544" description="Probable 1,4-beta-D-glucan cellobiohydrolase A">
    <location>
        <begin position="18"/>
        <end position="446"/>
    </location>
</feature>
<feature type="region of interest" description="Disordered" evidence="3">
    <location>
        <begin position="399"/>
        <end position="420"/>
    </location>
</feature>
<feature type="active site" description="Nucleophile" evidence="1">
    <location>
        <position position="226"/>
    </location>
</feature>
<feature type="active site" description="Proton donor" evidence="1">
    <location>
        <position position="231"/>
    </location>
</feature>
<feature type="glycosylation site" description="N-linked (GlcNAc...) asparagine" evidence="2">
    <location>
        <position position="81"/>
    </location>
</feature>
<feature type="glycosylation site" description="N-linked (GlcNAc...) asparagine" evidence="2">
    <location>
        <position position="284"/>
    </location>
</feature>
<feature type="glycosylation site" description="N-linked (GlcNAc...) asparagine" evidence="2">
    <location>
        <position position="333"/>
    </location>
</feature>
<feature type="sequence conflict" description="In Ref. 1; AAM54069." evidence="6" ref="1">
    <original>L</original>
    <variation>F</variation>
    <location>
        <position position="150"/>
    </location>
</feature>
<feature type="sequence conflict" description="In Ref. 1; AAM54069." evidence="6" ref="1">
    <original>S</original>
    <variation>R</variation>
    <location>
        <position position="286"/>
    </location>
</feature>
<protein>
    <recommendedName>
        <fullName>Probable 1,4-beta-D-glucan cellobiohydrolase A</fullName>
        <ecNumber>3.2.1.91</ecNumber>
    </recommendedName>
    <alternativeName>
        <fullName>Beta-glucancellobiohydrolase A</fullName>
    </alternativeName>
    <alternativeName>
        <fullName>Cellobiohydrolase D</fullName>
    </alternativeName>
    <alternativeName>
        <fullName>Exocellobiohydrolase A</fullName>
    </alternativeName>
    <alternativeName>
        <fullName>Exoglucanase A</fullName>
    </alternativeName>
</protein>
<proteinExistence type="evidence at transcript level"/>
<gene>
    <name type="primary">cbhA</name>
    <name type="synonym">celD</name>
    <name type="ORF">AN5176</name>
</gene>
<accession>Q5B2Q4</accession>
<accession>C8VF49</accession>
<accession>Q1HFS9</accession>
<accession>Q8NK03</accession>
<evidence type="ECO:0000250" key="1"/>
<evidence type="ECO:0000255" key="2"/>
<evidence type="ECO:0000256" key="3">
    <source>
        <dbReference type="SAM" id="MobiDB-lite"/>
    </source>
</evidence>
<evidence type="ECO:0000269" key="4">
    <source>
    </source>
</evidence>
<evidence type="ECO:0000269" key="5">
    <source>
    </source>
</evidence>
<evidence type="ECO:0000305" key="6"/>
<dbReference type="EC" id="3.2.1.91"/>
<dbReference type="EMBL" id="AF420019">
    <property type="protein sequence ID" value="AAM54069.1"/>
    <property type="molecule type" value="Genomic_DNA"/>
</dbReference>
<dbReference type="EMBL" id="DQ490495">
    <property type="protein sequence ID" value="ABF50871.1"/>
    <property type="molecule type" value="mRNA"/>
</dbReference>
<dbReference type="EMBL" id="AACD01000089">
    <property type="protein sequence ID" value="EAA62357.1"/>
    <property type="molecule type" value="Genomic_DNA"/>
</dbReference>
<dbReference type="EMBL" id="BN001305">
    <property type="protein sequence ID" value="CBF81021.1"/>
    <property type="molecule type" value="Genomic_DNA"/>
</dbReference>
<dbReference type="RefSeq" id="XP_662780.1">
    <property type="nucleotide sequence ID" value="XM_657688.1"/>
</dbReference>
<dbReference type="SMR" id="Q5B2Q4"/>
<dbReference type="STRING" id="227321.Q5B2Q4"/>
<dbReference type="CAZy" id="GH7">
    <property type="family name" value="Glycoside Hydrolase Family 7"/>
</dbReference>
<dbReference type="GlyCosmos" id="Q5B2Q4">
    <property type="glycosylation" value="3 sites, No reported glycans"/>
</dbReference>
<dbReference type="EnsemblFungi" id="CBF81021">
    <property type="protein sequence ID" value="CBF81021"/>
    <property type="gene ID" value="ANIA_05176"/>
</dbReference>
<dbReference type="KEGG" id="ani:ANIA_05176"/>
<dbReference type="VEuPathDB" id="FungiDB:AN5176"/>
<dbReference type="eggNOG" id="ENOG502QPHV">
    <property type="taxonomic scope" value="Eukaryota"/>
</dbReference>
<dbReference type="HOGENOM" id="CLU_020817_3_2_1"/>
<dbReference type="InParanoid" id="Q5B2Q4"/>
<dbReference type="OMA" id="NTYQMFQ"/>
<dbReference type="OrthoDB" id="412382at2759"/>
<dbReference type="Proteomes" id="UP000000560">
    <property type="component" value="Chromosome V"/>
</dbReference>
<dbReference type="GO" id="GO:0005576">
    <property type="term" value="C:extracellular region"/>
    <property type="evidence" value="ECO:0007669"/>
    <property type="project" value="UniProtKB-SubCell"/>
</dbReference>
<dbReference type="GO" id="GO:0016162">
    <property type="term" value="F:cellulose 1,4-beta-cellobiosidase activity"/>
    <property type="evidence" value="ECO:0000318"/>
    <property type="project" value="GO_Central"/>
</dbReference>
<dbReference type="GO" id="GO:0030245">
    <property type="term" value="P:cellulose catabolic process"/>
    <property type="evidence" value="ECO:0007669"/>
    <property type="project" value="UniProtKB-KW"/>
</dbReference>
<dbReference type="GO" id="GO:0009251">
    <property type="term" value="P:glucan catabolic process"/>
    <property type="evidence" value="ECO:0000318"/>
    <property type="project" value="GO_Central"/>
</dbReference>
<dbReference type="CDD" id="cd07999">
    <property type="entry name" value="GH7_CBH_EG"/>
    <property type="match status" value="1"/>
</dbReference>
<dbReference type="FunFam" id="2.70.100.10:FF:000001">
    <property type="entry name" value="Glucanase"/>
    <property type="match status" value="1"/>
</dbReference>
<dbReference type="Gene3D" id="2.70.100.10">
    <property type="entry name" value="Glycoside hydrolase, family 7, domain"/>
    <property type="match status" value="1"/>
</dbReference>
<dbReference type="InterPro" id="IPR013320">
    <property type="entry name" value="ConA-like_dom_sf"/>
</dbReference>
<dbReference type="InterPro" id="IPR001722">
    <property type="entry name" value="Glyco_hydro_7"/>
</dbReference>
<dbReference type="InterPro" id="IPR037019">
    <property type="entry name" value="Glyco_hydro_7_sf"/>
</dbReference>
<dbReference type="PANTHER" id="PTHR33753:SF6">
    <property type="entry name" value="1,4-BETA-D-GLUCAN CELLOBIOHYDROLASE A-RELATED"/>
    <property type="match status" value="1"/>
</dbReference>
<dbReference type="PANTHER" id="PTHR33753">
    <property type="entry name" value="1,4-BETA-D-GLUCAN CELLOBIOHYDROLASE B"/>
    <property type="match status" value="1"/>
</dbReference>
<dbReference type="Pfam" id="PF00840">
    <property type="entry name" value="Glyco_hydro_7"/>
    <property type="match status" value="1"/>
</dbReference>
<dbReference type="PRINTS" id="PR00734">
    <property type="entry name" value="GLHYDRLASE7"/>
</dbReference>
<dbReference type="SUPFAM" id="SSF49899">
    <property type="entry name" value="Concanavalin A-like lectins/glucanases"/>
    <property type="match status" value="1"/>
</dbReference>
<keyword id="KW-0119">Carbohydrate metabolism</keyword>
<keyword id="KW-0136">Cellulose degradation</keyword>
<keyword id="KW-0325">Glycoprotein</keyword>
<keyword id="KW-0326">Glycosidase</keyword>
<keyword id="KW-0378">Hydrolase</keyword>
<keyword id="KW-0624">Polysaccharide degradation</keyword>
<keyword id="KW-1185">Reference proteome</keyword>
<keyword id="KW-0964">Secreted</keyword>
<keyword id="KW-0732">Signal</keyword>
<name>CBHA_EMENI</name>
<reference key="1">
    <citation type="journal article" date="2002" name="Fungal Genet. Biol.">
        <title>Regulation by carbon and nitrogen sources of a family of cellulases in Aspergillus nidulans.</title>
        <authorList>
            <person name="Lockington R.A."/>
            <person name="Rodbourn L."/>
            <person name="Barnett S."/>
            <person name="Carter C.J."/>
            <person name="Kelly J.M."/>
        </authorList>
    </citation>
    <scope>NUCLEOTIDE SEQUENCE [GENOMIC DNA]</scope>
    <scope>INDUCTION</scope>
</reference>
<reference key="2">
    <citation type="journal article" date="2006" name="Proc. Natl. Acad. Sci. U.S.A.">
        <title>Development and application of a suite of polysaccharide-degrading enzymes for analyzing plant cell walls.</title>
        <authorList>
            <person name="Bauer S."/>
            <person name="Vasu P."/>
            <person name="Persson S."/>
            <person name="Mort A.J."/>
            <person name="Somerville C.R."/>
        </authorList>
    </citation>
    <scope>NUCLEOTIDE SEQUENCE [MRNA]</scope>
    <scope>FUNCTION</scope>
    <scope>BIOPHYSICOCHEMICAL PROPERTIES</scope>
    <source>
        <strain>FGSC A4 / ATCC 38163 / CBS 112.46 / NRRL 194 / M139</strain>
    </source>
</reference>
<reference key="3">
    <citation type="journal article" date="2005" name="Nature">
        <title>Sequencing of Aspergillus nidulans and comparative analysis with A. fumigatus and A. oryzae.</title>
        <authorList>
            <person name="Galagan J.E."/>
            <person name="Calvo S.E."/>
            <person name="Cuomo C."/>
            <person name="Ma L.-J."/>
            <person name="Wortman J.R."/>
            <person name="Batzoglou S."/>
            <person name="Lee S.-I."/>
            <person name="Bastuerkmen M."/>
            <person name="Spevak C.C."/>
            <person name="Clutterbuck J."/>
            <person name="Kapitonov V."/>
            <person name="Jurka J."/>
            <person name="Scazzocchio C."/>
            <person name="Farman M.L."/>
            <person name="Butler J."/>
            <person name="Purcell S."/>
            <person name="Harris S."/>
            <person name="Braus G.H."/>
            <person name="Draht O."/>
            <person name="Busch S."/>
            <person name="D'Enfert C."/>
            <person name="Bouchier C."/>
            <person name="Goldman G.H."/>
            <person name="Bell-Pedersen D."/>
            <person name="Griffiths-Jones S."/>
            <person name="Doonan J.H."/>
            <person name="Yu J."/>
            <person name="Vienken K."/>
            <person name="Pain A."/>
            <person name="Freitag M."/>
            <person name="Selker E.U."/>
            <person name="Archer D.B."/>
            <person name="Penalva M.A."/>
            <person name="Oakley B.R."/>
            <person name="Momany M."/>
            <person name="Tanaka T."/>
            <person name="Kumagai T."/>
            <person name="Asai K."/>
            <person name="Machida M."/>
            <person name="Nierman W.C."/>
            <person name="Denning D.W."/>
            <person name="Caddick M.X."/>
            <person name="Hynes M."/>
            <person name="Paoletti M."/>
            <person name="Fischer R."/>
            <person name="Miller B.L."/>
            <person name="Dyer P.S."/>
            <person name="Sachs M.S."/>
            <person name="Osmani S.A."/>
            <person name="Birren B.W."/>
        </authorList>
    </citation>
    <scope>NUCLEOTIDE SEQUENCE [LARGE SCALE GENOMIC DNA]</scope>
    <source>
        <strain>FGSC A4 / ATCC 38163 / CBS 112.46 / NRRL 194 / M139</strain>
    </source>
</reference>
<reference key="4">
    <citation type="journal article" date="2009" name="Fungal Genet. Biol.">
        <title>The 2008 update of the Aspergillus nidulans genome annotation: a community effort.</title>
        <authorList>
            <person name="Wortman J.R."/>
            <person name="Gilsenan J.M."/>
            <person name="Joardar V."/>
            <person name="Deegan J."/>
            <person name="Clutterbuck J."/>
            <person name="Andersen M.R."/>
            <person name="Archer D."/>
            <person name="Bencina M."/>
            <person name="Braus G."/>
            <person name="Coutinho P."/>
            <person name="von Dohren H."/>
            <person name="Doonan J."/>
            <person name="Driessen A.J."/>
            <person name="Durek P."/>
            <person name="Espeso E."/>
            <person name="Fekete E."/>
            <person name="Flipphi M."/>
            <person name="Estrada C.G."/>
            <person name="Geysens S."/>
            <person name="Goldman G."/>
            <person name="de Groot P.W."/>
            <person name="Hansen K."/>
            <person name="Harris S.D."/>
            <person name="Heinekamp T."/>
            <person name="Helmstaedt K."/>
            <person name="Henrissat B."/>
            <person name="Hofmann G."/>
            <person name="Homan T."/>
            <person name="Horio T."/>
            <person name="Horiuchi H."/>
            <person name="James S."/>
            <person name="Jones M."/>
            <person name="Karaffa L."/>
            <person name="Karanyi Z."/>
            <person name="Kato M."/>
            <person name="Keller N."/>
            <person name="Kelly D.E."/>
            <person name="Kiel J.A."/>
            <person name="Kim J.M."/>
            <person name="van der Klei I.J."/>
            <person name="Klis F.M."/>
            <person name="Kovalchuk A."/>
            <person name="Krasevec N."/>
            <person name="Kubicek C.P."/>
            <person name="Liu B."/>
            <person name="Maccabe A."/>
            <person name="Meyer V."/>
            <person name="Mirabito P."/>
            <person name="Miskei M."/>
            <person name="Mos M."/>
            <person name="Mullins J."/>
            <person name="Nelson D.R."/>
            <person name="Nielsen J."/>
            <person name="Oakley B.R."/>
            <person name="Osmani S.A."/>
            <person name="Pakula T."/>
            <person name="Paszewski A."/>
            <person name="Paulsen I."/>
            <person name="Pilsyk S."/>
            <person name="Pocsi I."/>
            <person name="Punt P.J."/>
            <person name="Ram A.F."/>
            <person name="Ren Q."/>
            <person name="Robellet X."/>
            <person name="Robson G."/>
            <person name="Seiboth B."/>
            <person name="van Solingen P."/>
            <person name="Specht T."/>
            <person name="Sun J."/>
            <person name="Taheri-Talesh N."/>
            <person name="Takeshita N."/>
            <person name="Ussery D."/>
            <person name="vanKuyk P.A."/>
            <person name="Visser H."/>
            <person name="van de Vondervoort P.J."/>
            <person name="de Vries R.P."/>
            <person name="Walton J."/>
            <person name="Xiang X."/>
            <person name="Xiong Y."/>
            <person name="Zeng A.P."/>
            <person name="Brandt B.W."/>
            <person name="Cornell M.J."/>
            <person name="van den Hondel C.A."/>
            <person name="Visser J."/>
            <person name="Oliver S.G."/>
            <person name="Turner G."/>
        </authorList>
    </citation>
    <scope>GENOME REANNOTATION</scope>
    <source>
        <strain>FGSC A4 / ATCC 38163 / CBS 112.46 / NRRL 194 / M139</strain>
    </source>
</reference>
<comment type="function">
    <text evidence="1 5">The biological conversion of cellulose to glucose generally requires three types of hydrolytic enzymes: (1) Endoglucanases which cut internal beta-1,4-glucosidic bonds; (2) Exocellobiohydrolases that cut the disaccharide cellobiose from the non-reducing end of the cellulose polymer chain; (3) Beta-1,4-glucosidases which hydrolyze the cellobiose and other short cello-oligosaccharides to glucose.</text>
</comment>
<comment type="catalytic activity">
    <reaction>
        <text>Hydrolysis of (1-&gt;4)-beta-D-glucosidic linkages in cellulose and cellotetraose, releasing cellobiose from the non-reducing ends of the chains.</text>
        <dbReference type="EC" id="3.2.1.91"/>
    </reaction>
</comment>
<comment type="subcellular location">
    <subcellularLocation>
        <location evidence="6">Secreted</location>
    </subcellularLocation>
</comment>
<comment type="induction">
    <text evidence="4">Repressed by D-glucose.</text>
</comment>
<comment type="similarity">
    <text evidence="6">Belongs to the glycosyl hydrolase 7 (cellulase C) family.</text>
</comment>
<sequence length="446" mass="47638">MYQRALLFSALLSVSRAQQAGTAQEEVHPSLTWQRCEASGSCTEVAGSVVLDSNWRWTHSVDGYTNCYTGNEWDATLCPDNESCAQNCAVDGADYEATYGITSNGDSLTLKFVTGSNVGSRVYLMEDDETYQMFDLLNNEFTFDVDVSNLPCGLNGALYFTSMDADGGLSKYEGNTAGAKYGTGYCDSQCPRDIKFINGLGNVEGWEPSDSDANAGVGGMGTCCPEMDIWEANSISTAYTPHPCDSVEQTMCEGDSCGGTYSDDRYGGTCDPDGCDFNSYRMGNTSFYGPGAIIDTSSKFTVVTQFIADGGSLSEIKRFYVQNGEVIPNSESNISGVEGNSITSEFCTAQKTAFGDEDIFAQHGGLSAMGDAASAMVLILSIWDDHHSSMMWLDSSYPTDADPSQPGVARGTCEQGAGDPDVVESEHADASVTFSNIKFGPIGSTF</sequence>